<sequence length="519" mass="56738">MQSLWIYPEDTEVLGAACKSLLKALKPRYQKIALFSPISGGCEGFGECESLSSLEVHSAIDKQKALELVSTAQEELLFETILKRYDELQSTHDFVINLGYAPKFFLNALLDLNTILAKHLNAPVVAVAQTSLDHLKAMHSHILKKEAPFAIGLFVGETLEKPHFLSASLCKQQCELEASAIENLLQTKSEIITPLAFQRSLEKKAKKQIKKVVLPESEDERILKAAHRLNLMGAVGLILLGDKEAINSQAKNLNLNLENVEIINPNTSHYREEFAKSLYELRKSKGLSEQEAERLALDKTYFATMLVHLGYAHAMVSGVNHTTAETIRPALQIIKTKPGVSLVSSVFLMCLDTQVFVFGDCAIIPNPSPKELAEIATTSAQTAKQFNIAPKVALLSYATGNSAQGEMIDKINEALTIVQKLDPQLEIDGPLQFDASIDKGVAKKKMPNSQVAGQASVFIFPDLNAGNIAYKAVQRSAKAVAIGPILQGLNKPINDLSRGALVEDIVNTVLISAIQAQDY</sequence>
<feature type="chain" id="PRO_0000179131" description="Phosphate acetyltransferase">
    <location>
        <begin position="1"/>
        <end position="519"/>
    </location>
</feature>
<feature type="region of interest" description="Phosphate acetyltransferase">
    <location>
        <begin position="196"/>
        <end position="519"/>
    </location>
</feature>
<accession>Q9ZKU4</accession>
<gene>
    <name type="primary">pta</name>
    <name type="ordered locus">jhp_0841</name>
</gene>
<organism>
    <name type="scientific">Helicobacter pylori (strain J99 / ATCC 700824)</name>
    <name type="common">Campylobacter pylori J99</name>
    <dbReference type="NCBI Taxonomy" id="85963"/>
    <lineage>
        <taxon>Bacteria</taxon>
        <taxon>Pseudomonadati</taxon>
        <taxon>Campylobacterota</taxon>
        <taxon>Epsilonproteobacteria</taxon>
        <taxon>Campylobacterales</taxon>
        <taxon>Helicobacteraceae</taxon>
        <taxon>Helicobacter</taxon>
    </lineage>
</organism>
<evidence type="ECO:0000305" key="1"/>
<comment type="catalytic activity">
    <reaction>
        <text>acetyl-CoA + phosphate = acetyl phosphate + CoA</text>
        <dbReference type="Rhea" id="RHEA:19521"/>
        <dbReference type="ChEBI" id="CHEBI:22191"/>
        <dbReference type="ChEBI" id="CHEBI:43474"/>
        <dbReference type="ChEBI" id="CHEBI:57287"/>
        <dbReference type="ChEBI" id="CHEBI:57288"/>
        <dbReference type="EC" id="2.3.1.8"/>
    </reaction>
</comment>
<comment type="pathway">
    <text>Metabolic intermediate biosynthesis; acetyl-CoA biosynthesis; acetyl-CoA from acetate: step 2/2.</text>
</comment>
<comment type="subcellular location">
    <subcellularLocation>
        <location evidence="1">Cytoplasm</location>
    </subcellularLocation>
</comment>
<comment type="similarity">
    <text evidence="1">In the N-terminal section; belongs to the CobB/CobQ family.</text>
</comment>
<comment type="similarity">
    <text evidence="1">In the C-terminal section; belongs to the phosphate acetyltransferase and butyryltransferase family.</text>
</comment>
<dbReference type="EC" id="2.3.1.8"/>
<dbReference type="EMBL" id="AE001439">
    <property type="protein sequence ID" value="AAD06419.1"/>
    <property type="molecule type" value="Genomic_DNA"/>
</dbReference>
<dbReference type="PIR" id="D71881">
    <property type="entry name" value="D71881"/>
</dbReference>
<dbReference type="RefSeq" id="WP_001191463.1">
    <property type="nucleotide sequence ID" value="NC_000921.1"/>
</dbReference>
<dbReference type="SMR" id="Q9ZKU4"/>
<dbReference type="KEGG" id="hpj:jhp_0841"/>
<dbReference type="PATRIC" id="fig|85963.30.peg.126"/>
<dbReference type="eggNOG" id="COG0280">
    <property type="taxonomic scope" value="Bacteria"/>
</dbReference>
<dbReference type="UniPathway" id="UPA00340">
    <property type="reaction ID" value="UER00459"/>
</dbReference>
<dbReference type="Proteomes" id="UP000000804">
    <property type="component" value="Chromosome"/>
</dbReference>
<dbReference type="GO" id="GO:0005737">
    <property type="term" value="C:cytoplasm"/>
    <property type="evidence" value="ECO:0007669"/>
    <property type="project" value="UniProtKB-SubCell"/>
</dbReference>
<dbReference type="GO" id="GO:0008959">
    <property type="term" value="F:phosphate acetyltransferase activity"/>
    <property type="evidence" value="ECO:0007669"/>
    <property type="project" value="UniProtKB-EC"/>
</dbReference>
<dbReference type="GO" id="GO:0006085">
    <property type="term" value="P:acetyl-CoA biosynthetic process"/>
    <property type="evidence" value="ECO:0007669"/>
    <property type="project" value="UniProtKB-UniPathway"/>
</dbReference>
<dbReference type="Gene3D" id="3.40.50.10950">
    <property type="match status" value="1"/>
</dbReference>
<dbReference type="Gene3D" id="3.40.50.10750">
    <property type="entry name" value="Isocitrate/Isopropylmalate dehydrogenase-like"/>
    <property type="match status" value="1"/>
</dbReference>
<dbReference type="InterPro" id="IPR004614">
    <property type="entry name" value="P_AcTrfase"/>
</dbReference>
<dbReference type="InterPro" id="IPR042113">
    <property type="entry name" value="P_AcTrfase_dom1"/>
</dbReference>
<dbReference type="InterPro" id="IPR042112">
    <property type="entry name" value="P_AcTrfase_dom2"/>
</dbReference>
<dbReference type="InterPro" id="IPR050500">
    <property type="entry name" value="Phos_Acetyltrans/Butyryltrans"/>
</dbReference>
<dbReference type="InterPro" id="IPR002505">
    <property type="entry name" value="PTA_PTB"/>
</dbReference>
<dbReference type="NCBIfam" id="NF004167">
    <property type="entry name" value="PRK05632.1"/>
    <property type="match status" value="1"/>
</dbReference>
<dbReference type="NCBIfam" id="NF007233">
    <property type="entry name" value="PRK09653.1"/>
    <property type="match status" value="1"/>
</dbReference>
<dbReference type="NCBIfam" id="TIGR00651">
    <property type="entry name" value="pta"/>
    <property type="match status" value="1"/>
</dbReference>
<dbReference type="PANTHER" id="PTHR43356">
    <property type="entry name" value="PHOSPHATE ACETYLTRANSFERASE"/>
    <property type="match status" value="1"/>
</dbReference>
<dbReference type="PANTHER" id="PTHR43356:SF3">
    <property type="entry name" value="PHOSPHATE ACETYLTRANSFERASE"/>
    <property type="match status" value="1"/>
</dbReference>
<dbReference type="Pfam" id="PF01515">
    <property type="entry name" value="PTA_PTB"/>
    <property type="match status" value="1"/>
</dbReference>
<dbReference type="SUPFAM" id="SSF53659">
    <property type="entry name" value="Isocitrate/Isopropylmalate dehydrogenase-like"/>
    <property type="match status" value="1"/>
</dbReference>
<name>PTAS_HELPJ</name>
<reference key="1">
    <citation type="journal article" date="1999" name="Nature">
        <title>Genomic sequence comparison of two unrelated isolates of the human gastric pathogen Helicobacter pylori.</title>
        <authorList>
            <person name="Alm R.A."/>
            <person name="Ling L.-S.L."/>
            <person name="Moir D.T."/>
            <person name="King B.L."/>
            <person name="Brown E.D."/>
            <person name="Doig P.C."/>
            <person name="Smith D.R."/>
            <person name="Noonan B."/>
            <person name="Guild B.C."/>
            <person name="deJonge B.L."/>
            <person name="Carmel G."/>
            <person name="Tummino P.J."/>
            <person name="Caruso A."/>
            <person name="Uria-Nickelsen M."/>
            <person name="Mills D.M."/>
            <person name="Ives C."/>
            <person name="Gibson R."/>
            <person name="Merberg D."/>
            <person name="Mills S.D."/>
            <person name="Jiang Q."/>
            <person name="Taylor D.E."/>
            <person name="Vovis G.F."/>
            <person name="Trust T.J."/>
        </authorList>
    </citation>
    <scope>NUCLEOTIDE SEQUENCE [LARGE SCALE GENOMIC DNA]</scope>
    <source>
        <strain>J99 / ATCC 700824</strain>
    </source>
</reference>
<keyword id="KW-0012">Acyltransferase</keyword>
<keyword id="KW-0963">Cytoplasm</keyword>
<keyword id="KW-0808">Transferase</keyword>
<protein>
    <recommendedName>
        <fullName>Phosphate acetyltransferase</fullName>
        <ecNumber>2.3.1.8</ecNumber>
    </recommendedName>
    <alternativeName>
        <fullName>Phosphotransacetylase</fullName>
    </alternativeName>
</protein>
<proteinExistence type="inferred from homology"/>